<organism>
    <name type="scientific">Pseudoderopeltis foveolata</name>
    <name type="common">Cockroach</name>
    <dbReference type="NCBI Taxonomy" id="303879"/>
    <lineage>
        <taxon>Eukaryota</taxon>
        <taxon>Metazoa</taxon>
        <taxon>Ecdysozoa</taxon>
        <taxon>Arthropoda</taxon>
        <taxon>Hexapoda</taxon>
        <taxon>Insecta</taxon>
        <taxon>Pterygota</taxon>
        <taxon>Neoptera</taxon>
        <taxon>Polyneoptera</taxon>
        <taxon>Dictyoptera</taxon>
        <taxon>Blattodea</taxon>
        <taxon>Blattoidea</taxon>
        <taxon>Blattidae</taxon>
        <taxon>Blattinae</taxon>
        <taxon>Pseudoderopeltis</taxon>
    </lineage>
</organism>
<evidence type="ECO:0000255" key="1"/>
<evidence type="ECO:0000269" key="2">
    <source>
    </source>
</evidence>
<evidence type="ECO:0000303" key="3">
    <source>
    </source>
</evidence>
<evidence type="ECO:0000305" key="4"/>
<accession>P85758</accession>
<name>PVK1_PSEFO</name>
<comment type="function">
    <text evidence="4">Mediates visceral muscle contractile activity (myotropic activity).</text>
</comment>
<comment type="subcellular location">
    <subcellularLocation>
        <location evidence="4">Secreted</location>
    </subcellularLocation>
</comment>
<comment type="similarity">
    <text evidence="1">Belongs to the periviscerokinin family.</text>
</comment>
<protein>
    <recommendedName>
        <fullName evidence="3">Periviscerokinin-1</fullName>
        <shortName evidence="3">PseFo-PVK-1</shortName>
    </recommendedName>
</protein>
<sequence length="11" mass="1114">GASGLIPVMRN</sequence>
<keyword id="KW-0027">Amidation</keyword>
<keyword id="KW-0903">Direct protein sequencing</keyword>
<keyword id="KW-0527">Neuropeptide</keyword>
<keyword id="KW-0964">Secreted</keyword>
<feature type="peptide" id="PRO_0000378767" description="Periviscerokinin-1" evidence="2">
    <location>
        <begin position="1"/>
        <end position="11"/>
    </location>
</feature>
<feature type="modified residue" description="Asparagine amide" evidence="2">
    <location>
        <position position="11"/>
    </location>
</feature>
<reference evidence="4" key="1">
    <citation type="journal article" date="2009" name="BMC Evol. Biol.">
        <title>A proteomic approach for studying insect phylogeny: CAPA peptides of ancient insect taxa (Dictyoptera, Blattoptera) as a test case.</title>
        <authorList>
            <person name="Roth S."/>
            <person name="Fromm B."/>
            <person name="Gaede G."/>
            <person name="Predel R."/>
        </authorList>
    </citation>
    <scope>PROTEIN SEQUENCE</scope>
    <scope>AMIDATION AT ASN-11</scope>
    <source>
        <tissue evidence="2">Abdominal perisympathetic organs</tissue>
    </source>
</reference>
<proteinExistence type="evidence at protein level"/>
<dbReference type="GO" id="GO:0005576">
    <property type="term" value="C:extracellular region"/>
    <property type="evidence" value="ECO:0007669"/>
    <property type="project" value="UniProtKB-SubCell"/>
</dbReference>
<dbReference type="GO" id="GO:0007218">
    <property type="term" value="P:neuropeptide signaling pathway"/>
    <property type="evidence" value="ECO:0007669"/>
    <property type="project" value="UniProtKB-KW"/>
</dbReference>